<organism>
    <name type="scientific">Shigella boydii serotype 18 (strain CDC 3083-94 / BS512)</name>
    <dbReference type="NCBI Taxonomy" id="344609"/>
    <lineage>
        <taxon>Bacteria</taxon>
        <taxon>Pseudomonadati</taxon>
        <taxon>Pseudomonadota</taxon>
        <taxon>Gammaproteobacteria</taxon>
        <taxon>Enterobacterales</taxon>
        <taxon>Enterobacteriaceae</taxon>
        <taxon>Shigella</taxon>
    </lineage>
</organism>
<gene>
    <name evidence="1" type="primary">fadI</name>
    <name type="ordered locus">SbBS512_E2722</name>
</gene>
<name>FADI_SHIB3</name>
<sequence>MGQVLPLVTRQGDRIAIVSGLRTPFARQATAFHGIPAVDLGKMVVGELLARSEIPAEVIEQLVFGQVVQMPEAPNIAREIVLGTGMNVHTDAYSVSRACATSFQAVANVAESLMAGTIRAGIAGGADSSSVLPIGVSKKLARVLVDVNKARTMSQRLKLFSRLRLRDLMPVPPAVAEYSTGLRMGDTAEQMAKTYGITREQQDALAHRSHQRAAQAWSDGKLKEEVMTAFIPPYKQPLVEDNNIRGNSSLADYAKLRPAFDRKHGTVTAANSTPLTDGAAAVILMTESRAKELGLVPLGYLRSYAFTAIDVWQDMLFGPAWSTPLALERAGLTMSDLTLIDMHEAFAAQTLANIQLLGSERFAREVLGRAHATGEVDDSKFNVLGGSIAYGHPFAATGARMITQTLHELRRRGGGFGLVTACAAGGLGAAMVLEAE</sequence>
<accession>B2TWV5</accession>
<keyword id="KW-0012">Acyltransferase</keyword>
<keyword id="KW-0963">Cytoplasm</keyword>
<keyword id="KW-0276">Fatty acid metabolism</keyword>
<keyword id="KW-0442">Lipid degradation</keyword>
<keyword id="KW-0443">Lipid metabolism</keyword>
<keyword id="KW-1185">Reference proteome</keyword>
<keyword id="KW-0808">Transferase</keyword>
<reference key="1">
    <citation type="submission" date="2008-05" db="EMBL/GenBank/DDBJ databases">
        <title>Complete sequence of Shigella boydii serotype 18 strain BS512.</title>
        <authorList>
            <person name="Rasko D.A."/>
            <person name="Rosovitz M."/>
            <person name="Maurelli A.T."/>
            <person name="Myers G."/>
            <person name="Seshadri R."/>
            <person name="Cer R."/>
            <person name="Jiang L."/>
            <person name="Ravel J."/>
            <person name="Sebastian Y."/>
        </authorList>
    </citation>
    <scope>NUCLEOTIDE SEQUENCE [LARGE SCALE GENOMIC DNA]</scope>
    <source>
        <strain>CDC 3083-94 / BS512</strain>
    </source>
</reference>
<comment type="function">
    <text evidence="1">Catalyzes the final step of fatty acid oxidation in which acetyl-CoA is released and the CoA ester of a fatty acid two carbons shorter is formed.</text>
</comment>
<comment type="catalytic activity">
    <reaction evidence="1">
        <text>an acyl-CoA + acetyl-CoA = a 3-oxoacyl-CoA + CoA</text>
        <dbReference type="Rhea" id="RHEA:21564"/>
        <dbReference type="ChEBI" id="CHEBI:57287"/>
        <dbReference type="ChEBI" id="CHEBI:57288"/>
        <dbReference type="ChEBI" id="CHEBI:58342"/>
        <dbReference type="ChEBI" id="CHEBI:90726"/>
        <dbReference type="EC" id="2.3.1.16"/>
    </reaction>
</comment>
<comment type="pathway">
    <text evidence="1">Lipid metabolism; fatty acid beta-oxidation.</text>
</comment>
<comment type="subunit">
    <text evidence="1">Heterotetramer of two alpha chains (FadJ) and two beta chains (FadI).</text>
</comment>
<comment type="subcellular location">
    <subcellularLocation>
        <location evidence="1">Cytoplasm</location>
    </subcellularLocation>
</comment>
<comment type="similarity">
    <text evidence="1">Belongs to the thiolase-like superfamily. Thiolase family.</text>
</comment>
<dbReference type="EC" id="2.3.1.16" evidence="1"/>
<dbReference type="EMBL" id="CP001063">
    <property type="protein sequence ID" value="ACD08266.1"/>
    <property type="molecule type" value="Genomic_DNA"/>
</dbReference>
<dbReference type="RefSeq" id="WP_000531950.1">
    <property type="nucleotide sequence ID" value="NC_010658.1"/>
</dbReference>
<dbReference type="SMR" id="B2TWV5"/>
<dbReference type="STRING" id="344609.SbBS512_E2722"/>
<dbReference type="KEGG" id="sbc:SbBS512_E2722"/>
<dbReference type="HOGENOM" id="CLU_031026_2_0_6"/>
<dbReference type="UniPathway" id="UPA00659"/>
<dbReference type="Proteomes" id="UP000001030">
    <property type="component" value="Chromosome"/>
</dbReference>
<dbReference type="GO" id="GO:0005829">
    <property type="term" value="C:cytosol"/>
    <property type="evidence" value="ECO:0007669"/>
    <property type="project" value="TreeGrafter"/>
</dbReference>
<dbReference type="GO" id="GO:0003988">
    <property type="term" value="F:acetyl-CoA C-acyltransferase activity"/>
    <property type="evidence" value="ECO:0007669"/>
    <property type="project" value="UniProtKB-UniRule"/>
</dbReference>
<dbReference type="GO" id="GO:0006635">
    <property type="term" value="P:fatty acid beta-oxidation"/>
    <property type="evidence" value="ECO:0007669"/>
    <property type="project" value="UniProtKB-UniRule"/>
</dbReference>
<dbReference type="CDD" id="cd00751">
    <property type="entry name" value="thiolase"/>
    <property type="match status" value="1"/>
</dbReference>
<dbReference type="FunFam" id="3.40.47.10:FF:000011">
    <property type="entry name" value="3-ketoacyl-CoA thiolase"/>
    <property type="match status" value="1"/>
</dbReference>
<dbReference type="Gene3D" id="3.40.47.10">
    <property type="match status" value="1"/>
</dbReference>
<dbReference type="HAMAP" id="MF_01618">
    <property type="entry name" value="FadI"/>
    <property type="match status" value="1"/>
</dbReference>
<dbReference type="InterPro" id="IPR012806">
    <property type="entry name" value="Ac-CoA_C-AcTrfase_FadI"/>
</dbReference>
<dbReference type="InterPro" id="IPR002155">
    <property type="entry name" value="Thiolase"/>
</dbReference>
<dbReference type="InterPro" id="IPR016039">
    <property type="entry name" value="Thiolase-like"/>
</dbReference>
<dbReference type="InterPro" id="IPR020615">
    <property type="entry name" value="Thiolase_acyl_enz_int_AS"/>
</dbReference>
<dbReference type="InterPro" id="IPR020610">
    <property type="entry name" value="Thiolase_AS"/>
</dbReference>
<dbReference type="InterPro" id="IPR020617">
    <property type="entry name" value="Thiolase_C"/>
</dbReference>
<dbReference type="InterPro" id="IPR020613">
    <property type="entry name" value="Thiolase_CS"/>
</dbReference>
<dbReference type="InterPro" id="IPR020616">
    <property type="entry name" value="Thiolase_N"/>
</dbReference>
<dbReference type="NCBIfam" id="TIGR01930">
    <property type="entry name" value="AcCoA-C-Actrans"/>
    <property type="match status" value="1"/>
</dbReference>
<dbReference type="NCBIfam" id="TIGR02446">
    <property type="entry name" value="FadI"/>
    <property type="match status" value="1"/>
</dbReference>
<dbReference type="NCBIfam" id="NF006516">
    <property type="entry name" value="PRK08963.1"/>
    <property type="match status" value="1"/>
</dbReference>
<dbReference type="PANTHER" id="PTHR18919:SF107">
    <property type="entry name" value="ACETYL-COA ACETYLTRANSFERASE, CYTOSOLIC"/>
    <property type="match status" value="1"/>
</dbReference>
<dbReference type="PANTHER" id="PTHR18919">
    <property type="entry name" value="ACETYL-COA C-ACYLTRANSFERASE"/>
    <property type="match status" value="1"/>
</dbReference>
<dbReference type="Pfam" id="PF02803">
    <property type="entry name" value="Thiolase_C"/>
    <property type="match status" value="1"/>
</dbReference>
<dbReference type="Pfam" id="PF00108">
    <property type="entry name" value="Thiolase_N"/>
    <property type="match status" value="1"/>
</dbReference>
<dbReference type="PIRSF" id="PIRSF000429">
    <property type="entry name" value="Ac-CoA_Ac_transf"/>
    <property type="match status" value="1"/>
</dbReference>
<dbReference type="SUPFAM" id="SSF53901">
    <property type="entry name" value="Thiolase-like"/>
    <property type="match status" value="2"/>
</dbReference>
<dbReference type="PROSITE" id="PS00098">
    <property type="entry name" value="THIOLASE_1"/>
    <property type="match status" value="1"/>
</dbReference>
<dbReference type="PROSITE" id="PS00737">
    <property type="entry name" value="THIOLASE_2"/>
    <property type="match status" value="1"/>
</dbReference>
<dbReference type="PROSITE" id="PS00099">
    <property type="entry name" value="THIOLASE_3"/>
    <property type="match status" value="1"/>
</dbReference>
<protein>
    <recommendedName>
        <fullName evidence="1">3-ketoacyl-CoA thiolase</fullName>
        <ecNumber evidence="1">2.3.1.16</ecNumber>
    </recommendedName>
    <alternativeName>
        <fullName evidence="1">ACSs</fullName>
    </alternativeName>
    <alternativeName>
        <fullName evidence="1">Acetyl-CoA acyltransferase</fullName>
    </alternativeName>
    <alternativeName>
        <fullName evidence="1">Acyl-CoA ligase</fullName>
    </alternativeName>
    <alternativeName>
        <fullName evidence="1">Beta-ketothiolase</fullName>
    </alternativeName>
    <alternativeName>
        <fullName evidence="1">Fatty acid oxidation complex subunit beta</fullName>
    </alternativeName>
</protein>
<proteinExistence type="inferred from homology"/>
<feature type="chain" id="PRO_1000185982" description="3-ketoacyl-CoA thiolase">
    <location>
        <begin position="1"/>
        <end position="436"/>
    </location>
</feature>
<feature type="active site" description="Acyl-thioester intermediate" evidence="1">
    <location>
        <position position="99"/>
    </location>
</feature>
<feature type="active site" description="Proton acceptor" evidence="1">
    <location>
        <position position="392"/>
    </location>
</feature>
<feature type="active site" description="Proton acceptor" evidence="1">
    <location>
        <position position="422"/>
    </location>
</feature>
<evidence type="ECO:0000255" key="1">
    <source>
        <dbReference type="HAMAP-Rule" id="MF_01618"/>
    </source>
</evidence>